<proteinExistence type="inferred from homology"/>
<gene>
    <name evidence="1" type="primary">htpG</name>
    <name type="ordered locus">ABC0970</name>
</gene>
<name>HTPG_SHOC1</name>
<evidence type="ECO:0000255" key="1">
    <source>
        <dbReference type="HAMAP-Rule" id="MF_00505"/>
    </source>
</evidence>
<comment type="function">
    <text evidence="1">Molecular chaperone. Has ATPase activity.</text>
</comment>
<comment type="subunit">
    <text evidence="1">Homodimer.</text>
</comment>
<comment type="subcellular location">
    <subcellularLocation>
        <location evidence="1">Cytoplasm</location>
    </subcellularLocation>
</comment>
<comment type="similarity">
    <text evidence="1">Belongs to the heat shock protein 90 family.</text>
</comment>
<dbReference type="EMBL" id="AP006627">
    <property type="protein sequence ID" value="BAD63509.1"/>
    <property type="molecule type" value="Genomic_DNA"/>
</dbReference>
<dbReference type="RefSeq" id="WP_011245825.1">
    <property type="nucleotide sequence ID" value="NC_006582.1"/>
</dbReference>
<dbReference type="SMR" id="Q5WJE6"/>
<dbReference type="STRING" id="66692.ABC0970"/>
<dbReference type="KEGG" id="bcl:ABC0970"/>
<dbReference type="eggNOG" id="COG0326">
    <property type="taxonomic scope" value="Bacteria"/>
</dbReference>
<dbReference type="HOGENOM" id="CLU_006684_3_0_9"/>
<dbReference type="OrthoDB" id="9802640at2"/>
<dbReference type="Proteomes" id="UP000001168">
    <property type="component" value="Chromosome"/>
</dbReference>
<dbReference type="GO" id="GO:0005737">
    <property type="term" value="C:cytoplasm"/>
    <property type="evidence" value="ECO:0007669"/>
    <property type="project" value="UniProtKB-SubCell"/>
</dbReference>
<dbReference type="GO" id="GO:0005524">
    <property type="term" value="F:ATP binding"/>
    <property type="evidence" value="ECO:0007669"/>
    <property type="project" value="UniProtKB-UniRule"/>
</dbReference>
<dbReference type="GO" id="GO:0016887">
    <property type="term" value="F:ATP hydrolysis activity"/>
    <property type="evidence" value="ECO:0007669"/>
    <property type="project" value="InterPro"/>
</dbReference>
<dbReference type="GO" id="GO:0140662">
    <property type="term" value="F:ATP-dependent protein folding chaperone"/>
    <property type="evidence" value="ECO:0007669"/>
    <property type="project" value="InterPro"/>
</dbReference>
<dbReference type="GO" id="GO:0051082">
    <property type="term" value="F:unfolded protein binding"/>
    <property type="evidence" value="ECO:0007669"/>
    <property type="project" value="UniProtKB-UniRule"/>
</dbReference>
<dbReference type="CDD" id="cd16927">
    <property type="entry name" value="HATPase_Hsp90-like"/>
    <property type="match status" value="1"/>
</dbReference>
<dbReference type="FunFam" id="1.20.120.790:FF:000006">
    <property type="entry name" value="Chaperone protein HtpG"/>
    <property type="match status" value="1"/>
</dbReference>
<dbReference type="FunFam" id="3.30.230.80:FF:000002">
    <property type="entry name" value="Molecular chaperone HtpG"/>
    <property type="match status" value="1"/>
</dbReference>
<dbReference type="FunFam" id="3.30.565.10:FF:000009">
    <property type="entry name" value="Molecular chaperone HtpG"/>
    <property type="match status" value="1"/>
</dbReference>
<dbReference type="Gene3D" id="3.30.230.80">
    <property type="match status" value="1"/>
</dbReference>
<dbReference type="Gene3D" id="3.40.50.11260">
    <property type="match status" value="1"/>
</dbReference>
<dbReference type="Gene3D" id="1.20.120.790">
    <property type="entry name" value="Heat shock protein 90, C-terminal domain"/>
    <property type="match status" value="1"/>
</dbReference>
<dbReference type="Gene3D" id="3.30.565.10">
    <property type="entry name" value="Histidine kinase-like ATPase, C-terminal domain"/>
    <property type="match status" value="1"/>
</dbReference>
<dbReference type="HAMAP" id="MF_00505">
    <property type="entry name" value="HSP90"/>
    <property type="match status" value="1"/>
</dbReference>
<dbReference type="InterPro" id="IPR036890">
    <property type="entry name" value="HATPase_C_sf"/>
</dbReference>
<dbReference type="InterPro" id="IPR019805">
    <property type="entry name" value="Heat_shock_protein_90_CS"/>
</dbReference>
<dbReference type="InterPro" id="IPR037196">
    <property type="entry name" value="HSP90_C"/>
</dbReference>
<dbReference type="InterPro" id="IPR001404">
    <property type="entry name" value="Hsp90_fam"/>
</dbReference>
<dbReference type="InterPro" id="IPR020575">
    <property type="entry name" value="Hsp90_N"/>
</dbReference>
<dbReference type="InterPro" id="IPR020568">
    <property type="entry name" value="Ribosomal_Su5_D2-typ_SF"/>
</dbReference>
<dbReference type="NCBIfam" id="NF003555">
    <property type="entry name" value="PRK05218.1"/>
    <property type="match status" value="1"/>
</dbReference>
<dbReference type="PANTHER" id="PTHR11528">
    <property type="entry name" value="HEAT SHOCK PROTEIN 90 FAMILY MEMBER"/>
    <property type="match status" value="1"/>
</dbReference>
<dbReference type="Pfam" id="PF13589">
    <property type="entry name" value="HATPase_c_3"/>
    <property type="match status" value="1"/>
</dbReference>
<dbReference type="Pfam" id="PF00183">
    <property type="entry name" value="HSP90"/>
    <property type="match status" value="2"/>
</dbReference>
<dbReference type="PIRSF" id="PIRSF002583">
    <property type="entry name" value="Hsp90"/>
    <property type="match status" value="1"/>
</dbReference>
<dbReference type="PRINTS" id="PR00775">
    <property type="entry name" value="HEATSHOCK90"/>
</dbReference>
<dbReference type="SUPFAM" id="SSF55874">
    <property type="entry name" value="ATPase domain of HSP90 chaperone/DNA topoisomerase II/histidine kinase"/>
    <property type="match status" value="1"/>
</dbReference>
<dbReference type="SUPFAM" id="SSF110942">
    <property type="entry name" value="HSP90 C-terminal domain"/>
    <property type="match status" value="1"/>
</dbReference>
<dbReference type="SUPFAM" id="SSF54211">
    <property type="entry name" value="Ribosomal protein S5 domain 2-like"/>
    <property type="match status" value="1"/>
</dbReference>
<dbReference type="PROSITE" id="PS00298">
    <property type="entry name" value="HSP90"/>
    <property type="match status" value="1"/>
</dbReference>
<feature type="chain" id="PRO_0000224196" description="Chaperone protein HtpG">
    <location>
        <begin position="1"/>
        <end position="625"/>
    </location>
</feature>
<feature type="region of interest" description="A; substrate-binding" evidence="1">
    <location>
        <begin position="1"/>
        <end position="341"/>
    </location>
</feature>
<feature type="region of interest" description="B" evidence="1">
    <location>
        <begin position="342"/>
        <end position="551"/>
    </location>
</feature>
<feature type="region of interest" description="C" evidence="1">
    <location>
        <begin position="552"/>
        <end position="625"/>
    </location>
</feature>
<organism>
    <name type="scientific">Shouchella clausii (strain KSM-K16)</name>
    <name type="common">Alkalihalobacillus clausii</name>
    <dbReference type="NCBI Taxonomy" id="66692"/>
    <lineage>
        <taxon>Bacteria</taxon>
        <taxon>Bacillati</taxon>
        <taxon>Bacillota</taxon>
        <taxon>Bacilli</taxon>
        <taxon>Bacillales</taxon>
        <taxon>Bacillaceae</taxon>
        <taxon>Shouchella</taxon>
    </lineage>
</organism>
<protein>
    <recommendedName>
        <fullName evidence="1">Chaperone protein HtpG</fullName>
    </recommendedName>
    <alternativeName>
        <fullName evidence="1">Heat shock protein HtpG</fullName>
    </alternativeName>
    <alternativeName>
        <fullName evidence="1">High temperature protein G</fullName>
    </alternativeName>
</protein>
<reference key="1">
    <citation type="submission" date="2003-10" db="EMBL/GenBank/DDBJ databases">
        <title>The complete genome sequence of the alkaliphilic Bacillus clausii KSM-K16.</title>
        <authorList>
            <person name="Takaki Y."/>
            <person name="Kageyama Y."/>
            <person name="Shimamura S."/>
            <person name="Suzuki H."/>
            <person name="Nishi S."/>
            <person name="Hatada Y."/>
            <person name="Kawai S."/>
            <person name="Ito S."/>
            <person name="Horikoshi K."/>
        </authorList>
    </citation>
    <scope>NUCLEOTIDE SEQUENCE [LARGE SCALE GENOMIC DNA]</scope>
    <source>
        <strain>KSM-K16</strain>
    </source>
</reference>
<accession>Q5WJE6</accession>
<sequence length="625" mass="72747">MEKKQFQAESKRLLEMMVNSIYSQKEIFLRELISNASDAIDKMYYRSLTDDSLSFEKDRYAIYVEADKDNRKLVMKDTGIGMTKEELEANLGTIAKSGSLAFKKETEIEDGHDIIGQFGVGFYAAFMVADKVTVITRSIDSDQAYKWESDGTDGYTIEPAEKEDVGTVITLHIKENTDDESYDEYLEEYRIKAIIKKYSDFIRYPIKMNVTVSKPKEDNEDEYAEYQEEQTINSMVPIWRKNKSELKDSDYEQFYQDKRYGFDKPLEHIHVSVDGAIRYNAILFIPEHTPFDYYSKEYEKGLELYANGVLIMEKCAELLPDYFSFVKGMVDSEDLSLNISREMLQHDRQLKLIAKNIKSKIKSQLKTMLKKEPDKYEKFYKAFGRQLKFGVYNDFGANKDDLQDLLLFYSSTEKKLVSLSDYVSRMKEGQTYIYYATGESNERIAKLPQTEMVADQGYEILYFTEDVDEFAIKMLRSYDEKEFMSVSSADLDIETDEKQEEETNSEENKKLFEKMKSILDGKVKDVRTSKRLKSHPVFLAADGEITLEMEKVLQAMPDNQNVKAEKVLEINPNHDVFHSLKQAYEEDEDKLKLYTNLLYNQALLIEGLPLEDPVEFSQNMCKVMV</sequence>
<keyword id="KW-0067">ATP-binding</keyword>
<keyword id="KW-0143">Chaperone</keyword>
<keyword id="KW-0963">Cytoplasm</keyword>
<keyword id="KW-0547">Nucleotide-binding</keyword>
<keyword id="KW-1185">Reference proteome</keyword>
<keyword id="KW-0346">Stress response</keyword>